<organismHost>
    <name type="scientific">Homo sapiens</name>
    <name type="common">Human</name>
    <dbReference type="NCBI Taxonomy" id="9606"/>
</organismHost>
<accession>D0EZM8</accession>
<accession>A0A068B244</accession>
<accession>A0A1L2DWK9</accession>
<accession>A0A384KU82</accession>
<accession>H9CWJ3</accession>
<accession>J9RYC4</accession>
<accession>J9SK89</accession>
<accession>Q3YPH6</accession>
<feature type="chain" id="PRO_0000445633" description="Initiator protein NS1">
    <location>
        <begin position="1"/>
        <end position="781"/>
    </location>
</feature>
<feature type="domain" description="PV NS1-Nuc" evidence="4">
    <location>
        <begin position="11"/>
        <end position="271"/>
    </location>
</feature>
<feature type="domain" description="SF3 helicase" evidence="3">
    <location>
        <begin position="397"/>
        <end position="552"/>
    </location>
</feature>
<feature type="region of interest" description="Ori-binding" evidence="1">
    <location>
        <begin position="193"/>
        <end position="197"/>
    </location>
</feature>
<feature type="region of interest" description="Transactivation" evidence="1">
    <location>
        <begin position="606"/>
        <end position="781"/>
    </location>
</feature>
<feature type="region of interest" description="Disordered" evidence="5">
    <location>
        <begin position="621"/>
        <end position="679"/>
    </location>
</feature>
<feature type="region of interest" description="Disordered" evidence="5">
    <location>
        <begin position="709"/>
        <end position="781"/>
    </location>
</feature>
<feature type="short sequence motif" description="RCR-2" evidence="4">
    <location>
        <begin position="115"/>
        <end position="117"/>
    </location>
</feature>
<feature type="short sequence motif" description="RCR-3" evidence="4">
    <location>
        <begin position="211"/>
        <end position="215"/>
    </location>
</feature>
<feature type="compositionally biased region" description="Polar residues" evidence="5">
    <location>
        <begin position="621"/>
        <end position="635"/>
    </location>
</feature>
<feature type="compositionally biased region" description="Acidic residues" evidence="5">
    <location>
        <begin position="641"/>
        <end position="650"/>
    </location>
</feature>
<feature type="active site" description="For nuclease activity" evidence="4">
    <location>
        <position position="211"/>
    </location>
</feature>
<feature type="binding site" evidence="4">
    <location>
        <position position="108"/>
    </location>
    <ligand>
        <name>a divalent metal cation</name>
        <dbReference type="ChEBI" id="CHEBI:60240"/>
    </ligand>
</feature>
<feature type="binding site" evidence="4">
    <location>
        <position position="115"/>
    </location>
    <ligand>
        <name>a divalent metal cation</name>
        <dbReference type="ChEBI" id="CHEBI:60240"/>
    </ligand>
</feature>
<feature type="binding site" evidence="4">
    <location>
        <position position="117"/>
    </location>
    <ligand>
        <name>a divalent metal cation</name>
        <dbReference type="ChEBI" id="CHEBI:60240"/>
    </ligand>
</feature>
<feature type="binding site" evidence="3">
    <location>
        <begin position="423"/>
        <end position="430"/>
    </location>
    <ligand>
        <name>ATP</name>
        <dbReference type="ChEBI" id="CHEBI:30616"/>
    </ligand>
</feature>
<feature type="splice variant" id="VSP_059924" description="In isoform NS3 and isoform NS4.">
    <location>
        <begin position="1"/>
        <end position="274"/>
    </location>
</feature>
<feature type="splice variant" id="VSP_059925" description="In isoform NS2 and isoform NS4.">
    <location>
        <begin position="289"/>
        <end position="597"/>
    </location>
</feature>
<feature type="splice variant" id="VSP_059926" description="In isoform NS1-70.">
    <original>D</original>
    <variation>K</variation>
    <location>
        <position position="639"/>
    </location>
</feature>
<feature type="splice variant" id="VSP_059927" description="In isoform NS1-70.">
    <location>
        <begin position="640"/>
        <end position="781"/>
    </location>
</feature>
<feature type="sequence variant" description="In strain: Eg/BSU-1." evidence="8">
    <original>D</original>
    <variation>N</variation>
    <location>
        <position position="384"/>
    </location>
</feature>
<feature type="sequence variant" description="In strain: Eg/BSU-1." evidence="8">
    <original>P</original>
    <variation>L</variation>
    <location>
        <position position="398"/>
    </location>
</feature>
<feature type="sequence variant" description="In strain: Eg/BSU-1." evidence="8">
    <original>Q</original>
    <variation>H</variation>
    <location>
        <position position="536"/>
    </location>
</feature>
<feature type="sequence variant" description="In strain: Eg/BSU-1." evidence="8">
    <original>Y</original>
    <variation>H</variation>
    <location>
        <position position="566"/>
    </location>
</feature>
<feature type="sequence variant" description="In strain: Eg/BSU-1." evidence="8">
    <original>D</original>
    <variation>K</variation>
    <location>
        <position position="639"/>
    </location>
</feature>
<feature type="sequence variant" description="In strain: KU3 and Salvator1." evidence="8">
    <original>E</original>
    <variation>K</variation>
    <location>
        <position position="649"/>
    </location>
</feature>
<feature type="sequence variant" description="In strain: KU3 and Salvator1." evidence="8">
    <original>F</original>
    <variation>L</variation>
    <location>
        <position position="746"/>
    </location>
</feature>
<feature type="strand" evidence="9">
    <location>
        <begin position="13"/>
        <end position="21"/>
    </location>
</feature>
<feature type="turn" evidence="9">
    <location>
        <begin position="25"/>
        <end position="30"/>
    </location>
</feature>
<feature type="helix" evidence="9">
    <location>
        <begin position="31"/>
        <end position="38"/>
    </location>
</feature>
<feature type="helix" evidence="9">
    <location>
        <begin position="43"/>
        <end position="49"/>
    </location>
</feature>
<feature type="helix" evidence="9">
    <location>
        <begin position="60"/>
        <end position="69"/>
    </location>
</feature>
<feature type="turn" evidence="9">
    <location>
        <begin position="70"/>
        <end position="72"/>
    </location>
</feature>
<feature type="helix" evidence="9">
    <location>
        <begin position="74"/>
        <end position="94"/>
    </location>
</feature>
<feature type="strand" evidence="9">
    <location>
        <begin position="101"/>
        <end position="109"/>
    </location>
</feature>
<feature type="strand" evidence="9">
    <location>
        <begin position="114"/>
        <end position="122"/>
    </location>
</feature>
<feature type="turn" evidence="9">
    <location>
        <begin position="127"/>
        <end position="133"/>
    </location>
</feature>
<feature type="helix" evidence="9">
    <location>
        <begin position="134"/>
        <end position="149"/>
    </location>
</feature>
<feature type="helix" evidence="9">
    <location>
        <begin position="150"/>
        <end position="154"/>
    </location>
</feature>
<feature type="helix" evidence="9">
    <location>
        <begin position="160"/>
        <end position="177"/>
    </location>
</feature>
<feature type="strand" evidence="9">
    <location>
        <begin position="184"/>
        <end position="187"/>
    </location>
</feature>
<feature type="helix" evidence="9">
    <location>
        <begin position="204"/>
        <end position="210"/>
    </location>
</feature>
<feature type="helix" evidence="9">
    <location>
        <begin position="225"/>
        <end position="228"/>
    </location>
</feature>
<feature type="helix" evidence="9">
    <location>
        <begin position="231"/>
        <end position="233"/>
    </location>
</feature>
<feature type="strand" evidence="9">
    <location>
        <begin position="240"/>
        <end position="247"/>
    </location>
</feature>
<feature type="helix" evidence="9">
    <location>
        <begin position="254"/>
        <end position="256"/>
    </location>
</feature>
<feature type="helix" evidence="9">
    <location>
        <begin position="257"/>
        <end position="266"/>
    </location>
</feature>
<dbReference type="EC" id="3.1.21.-" evidence="2"/>
<dbReference type="EC" id="3.6.4.12" evidence="2"/>
<dbReference type="EMBL" id="DQ000496">
    <property type="protein sequence ID" value="AAY45700.1"/>
    <property type="molecule type" value="Genomic_DNA"/>
</dbReference>
<dbReference type="EMBL" id="GQ925675">
    <property type="protein sequence ID" value="ACX50492.1"/>
    <property type="molecule type" value="Genomic_DNA"/>
</dbReference>
<dbReference type="EMBL" id="GQ925675">
    <property type="protein sequence ID" value="ACX50493.1"/>
    <property type="molecule type" value="Genomic_DNA"/>
</dbReference>
<dbReference type="EMBL" id="JQ411251">
    <property type="protein sequence ID" value="AFC37600.1"/>
    <property type="molecule type" value="Genomic_DNA"/>
</dbReference>
<dbReference type="EMBL" id="JQ411251">
    <property type="protein sequence ID" value="AFC37603.1"/>
    <property type="molecule type" value="Genomic_DNA"/>
</dbReference>
<dbReference type="EMBL" id="JQ923422">
    <property type="protein sequence ID" value="AFR53039.1"/>
    <property type="molecule type" value="Genomic_DNA"/>
</dbReference>
<dbReference type="EMBL" id="JQ923422">
    <property type="protein sequence ID" value="AFR53040.1"/>
    <property type="molecule type" value="Genomic_DNA"/>
</dbReference>
<dbReference type="EMBL" id="KU557404">
    <property type="protein sequence ID" value="AND46431.1"/>
    <property type="molecule type" value="Genomic_DNA"/>
</dbReference>
<dbReference type="EMBL" id="KJ634207">
    <property type="protein sequence ID" value="AIC76457.1"/>
    <property type="molecule type" value="Genomic_DNA"/>
</dbReference>
<dbReference type="RefSeq" id="YP_338086.1">
    <property type="nucleotide sequence ID" value="NC_007455.1"/>
</dbReference>
<dbReference type="PDB" id="4KW3">
    <property type="method" value="X-ray"/>
    <property type="resolution" value="2.70 A"/>
    <property type="chains" value="A/B=1-271"/>
</dbReference>
<dbReference type="PDBsum" id="4KW3"/>
<dbReference type="SMR" id="D0EZM8"/>
<dbReference type="DNASU" id="3711585"/>
<dbReference type="GeneID" id="3711585"/>
<dbReference type="KEGG" id="vg:3711585"/>
<dbReference type="EvolutionaryTrace" id="D0EZM8"/>
<dbReference type="Proteomes" id="UP000101074">
    <property type="component" value="Genome"/>
</dbReference>
<dbReference type="Proteomes" id="UP000114321">
    <property type="component" value="Genome"/>
</dbReference>
<dbReference type="Proteomes" id="UP000118311">
    <property type="component" value="Segment"/>
</dbReference>
<dbReference type="Proteomes" id="UP000128269">
    <property type="component" value="Genome"/>
</dbReference>
<dbReference type="Proteomes" id="UP000140113">
    <property type="component" value="Segment"/>
</dbReference>
<dbReference type="GO" id="GO:0042025">
    <property type="term" value="C:host cell nucleus"/>
    <property type="evidence" value="ECO:0007669"/>
    <property type="project" value="UniProtKB-SubCell"/>
</dbReference>
<dbReference type="GO" id="GO:0005524">
    <property type="term" value="F:ATP binding"/>
    <property type="evidence" value="ECO:0007669"/>
    <property type="project" value="UniProtKB-KW"/>
</dbReference>
<dbReference type="GO" id="GO:0016887">
    <property type="term" value="F:ATP hydrolysis activity"/>
    <property type="evidence" value="ECO:0007669"/>
    <property type="project" value="RHEA"/>
</dbReference>
<dbReference type="GO" id="GO:0003677">
    <property type="term" value="F:DNA binding"/>
    <property type="evidence" value="ECO:0007669"/>
    <property type="project" value="UniProtKB-KW"/>
</dbReference>
<dbReference type="GO" id="GO:0004519">
    <property type="term" value="F:endonuclease activity"/>
    <property type="evidence" value="ECO:0007669"/>
    <property type="project" value="UniProtKB-KW"/>
</dbReference>
<dbReference type="GO" id="GO:0004386">
    <property type="term" value="F:helicase activity"/>
    <property type="evidence" value="ECO:0007669"/>
    <property type="project" value="UniProtKB-KW"/>
</dbReference>
<dbReference type="GO" id="GO:0046872">
    <property type="term" value="F:metal ion binding"/>
    <property type="evidence" value="ECO:0007669"/>
    <property type="project" value="UniProtKB-KW"/>
</dbReference>
<dbReference type="GO" id="GO:0006260">
    <property type="term" value="P:DNA replication"/>
    <property type="evidence" value="ECO:0007669"/>
    <property type="project" value="UniProtKB-KW"/>
</dbReference>
<dbReference type="GO" id="GO:0039693">
    <property type="term" value="P:viral DNA genome replication"/>
    <property type="evidence" value="ECO:0007669"/>
    <property type="project" value="UniProtKB-KW"/>
</dbReference>
<dbReference type="Gene3D" id="3.40.1310.20">
    <property type="match status" value="1"/>
</dbReference>
<dbReference type="Gene3D" id="3.40.50.300">
    <property type="entry name" value="P-loop containing nucleotide triphosphate hydrolases"/>
    <property type="match status" value="1"/>
</dbReference>
<dbReference type="InterPro" id="IPR054766">
    <property type="entry name" value="BoV_NS1-like_N"/>
</dbReference>
<dbReference type="InterPro" id="IPR014015">
    <property type="entry name" value="Helicase_SF3_DNA-vir"/>
</dbReference>
<dbReference type="InterPro" id="IPR027417">
    <property type="entry name" value="P-loop_NTPase"/>
</dbReference>
<dbReference type="InterPro" id="IPR001257">
    <property type="entry name" value="Parvovirus_NS1_helicase"/>
</dbReference>
<dbReference type="InterPro" id="IPR049901">
    <property type="entry name" value="PV_NS1-NUC"/>
</dbReference>
<dbReference type="Pfam" id="PF22419">
    <property type="entry name" value="HBoV_NS1-like_N"/>
    <property type="match status" value="1"/>
</dbReference>
<dbReference type="Pfam" id="PF01057">
    <property type="entry name" value="Parvo_NS1"/>
    <property type="match status" value="1"/>
</dbReference>
<dbReference type="SUPFAM" id="SSF52540">
    <property type="entry name" value="P-loop containing nucleoside triphosphate hydrolases"/>
    <property type="match status" value="1"/>
</dbReference>
<dbReference type="PROSITE" id="PS52022">
    <property type="entry name" value="PV_NS1_NUC"/>
    <property type="match status" value="1"/>
</dbReference>
<dbReference type="PROSITE" id="PS51206">
    <property type="entry name" value="SF3_HELICASE_1"/>
    <property type="match status" value="1"/>
</dbReference>
<evidence type="ECO:0000250" key="1">
    <source>
        <dbReference type="UniProtKB" id="P03134"/>
    </source>
</evidence>
<evidence type="ECO:0000250" key="2">
    <source>
        <dbReference type="UniProtKB" id="Q9PZT1"/>
    </source>
</evidence>
<evidence type="ECO:0000255" key="3">
    <source>
        <dbReference type="PROSITE-ProRule" id="PRU00551"/>
    </source>
</evidence>
<evidence type="ECO:0000255" key="4">
    <source>
        <dbReference type="PROSITE-ProRule" id="PRU01366"/>
    </source>
</evidence>
<evidence type="ECO:0000256" key="5">
    <source>
        <dbReference type="SAM" id="MobiDB-lite"/>
    </source>
</evidence>
<evidence type="ECO:0000269" key="6">
    <source>
    </source>
</evidence>
<evidence type="ECO:0000269" key="7">
    <source>
    </source>
</evidence>
<evidence type="ECO:0000305" key="8"/>
<evidence type="ECO:0007829" key="9">
    <source>
        <dbReference type="PDB" id="4KW3"/>
    </source>
</evidence>
<sequence length="781" mass="88180">MAFNPPVIRAFSQPAFTYVFKFPYPQWKEKEWLLHALLAHGTEQSMIQLRNCAPHPDEDIIRDDLLISLEDRHFGAVLCKAVYMATTTLMSHKQRNMFPRCDIIVQSELGEKNLHCHIIVGGEGLSKRNAKSSCAQFYGLILAEIIQRCKSLLATRPFEPEEADIFHTLKKAEREAWGGVTGGNMQILQYRDRRGDLHAQTVDPLRFFKNYLLPKNRCISSYSKPDVCTSPDNWFILAEKTYSHTLINGLPLPEHYRKNYHATLDNEVIPGPQTMAYGGRGPWEHLPEVGDQRLAASSVSTTYKPNKKEKLMLNLLDKCKELNLLVYEDLVANCPELLLMLEGQPGGARLIEQVLGMHHINVCSNFTALTYLFHLHPVTSLDSDNKALQLLLIQGYNPLAVGHALCCVLNKQFGKQNTVCFYGPASTGKTNMAKAIVQGIRLYGCVNHLNKGFVFNDCRQRLVVWWEECLMHQDWVEPAKCILGGTECRIDVKHRDSVLLTQTPVIISTNHDIYAVVGGNSVSHVHAAPLKERVIQLNFMKQLPQTFGEITATEIAALLQWCFNEYDCTLTGFKQKWNLDKIPNSFPLGVLCPTHSQDFTLHENGYCTDCGGYLPHSADNSMYTDRASETSTGDITPSDLGDSDGEDTEPETSQVDYCPPKKRRLTAPASPPNSPASSVSTITFFNTWHAQPRDEDELREYERQASLLQKKRESRKRGEEETLADNSSQEQEPQPDPTQWGERLGFISSGTPNQPPIVLHCFEDLRPSDEDEGEYIGEKRQ</sequence>
<keyword id="KW-0002">3D-structure</keyword>
<keyword id="KW-0025">Alternative splicing</keyword>
<keyword id="KW-0067">ATP-binding</keyword>
<keyword id="KW-0190">Covalent protein-DNA linkage</keyword>
<keyword id="KW-0235">DNA replication</keyword>
<keyword id="KW-0238">DNA-binding</keyword>
<keyword id="KW-0255">Endonuclease</keyword>
<keyword id="KW-0347">Helicase</keyword>
<keyword id="KW-1048">Host nucleus</keyword>
<keyword id="KW-0378">Hydrolase</keyword>
<keyword id="KW-0460">Magnesium</keyword>
<keyword id="KW-0479">Metal-binding</keyword>
<keyword id="KW-0511">Multifunctional enzyme</keyword>
<keyword id="KW-0540">Nuclease</keyword>
<keyword id="KW-0547">Nucleotide-binding</keyword>
<keyword id="KW-1185">Reference proteome</keyword>
<keyword id="KW-0804">Transcription</keyword>
<keyword id="KW-0805">Transcription regulation</keyword>
<keyword id="KW-1194">Viral DNA replication</keyword>
<gene>
    <name type="primary">NS1</name>
</gene>
<name>NS1_HBOC1</name>
<organism>
    <name type="scientific">Primate bocaparvovirus 1 (strain Human bocavirus 1 type 1)</name>
    <name type="common">HBoV1</name>
    <name type="synonym">Human bocavirus type 1</name>
    <dbReference type="NCBI Taxonomy" id="689403"/>
    <lineage>
        <taxon>Viruses</taxon>
        <taxon>Monodnaviria</taxon>
        <taxon>Shotokuvirae</taxon>
        <taxon>Cossaviricota</taxon>
        <taxon>Quintoviricetes</taxon>
        <taxon>Piccovirales</taxon>
        <taxon>Parvoviridae</taxon>
        <taxon>Parvovirinae</taxon>
        <taxon>Bocaparvovirus</taxon>
        <taxon>Bocaparvovirus primate1</taxon>
    </lineage>
</organism>
<comment type="function">
    <text evidence="1">Multifunctional protein which displays endonuclease and helicase activities required for initiating and directing viral DNA replication. Also plays a role in viral packaging and transactivation of several promoters. Binds site-specifically to 2-3 approximate tandem copies within the origins of replication (Ori), unwinds this hairpin region and nicks one DNA strand thereby initiating the rolling circle replication (RCR). Becomes covalently attached to the 5' end of the nick and provides a 3'OH for priming DNA synthesis. The helicase activity unwinds DNA in a 3'-5' direction on the longer strand. Participates in the transcriptional regulation of several promoters.</text>
</comment>
<comment type="catalytic activity">
    <reaction evidence="1">
        <text>ATP + H2O = ADP + phosphate + H(+)</text>
        <dbReference type="Rhea" id="RHEA:13065"/>
        <dbReference type="ChEBI" id="CHEBI:15377"/>
        <dbReference type="ChEBI" id="CHEBI:15378"/>
        <dbReference type="ChEBI" id="CHEBI:30616"/>
        <dbReference type="ChEBI" id="CHEBI:43474"/>
        <dbReference type="ChEBI" id="CHEBI:456216"/>
        <dbReference type="EC" id="3.6.4.12"/>
    </reaction>
</comment>
<comment type="cofactor">
    <cofactor evidence="1">
        <name>Mg(2+)</name>
        <dbReference type="ChEBI" id="CHEBI:18420"/>
    </cofactor>
    <text evidence="1">The endonuclease active site can probably bind other divalent cations.</text>
</comment>
<comment type="subunit">
    <text evidence="2">Homooligomer; when bound to DNA.</text>
</comment>
<comment type="subcellular location">
    <subcellularLocation>
        <location evidence="6">Host nucleus</location>
    </subcellularLocation>
</comment>
<comment type="alternative products">
    <event type="alternative splicing"/>
    <isoform>
        <id>D0EZM8-1</id>
        <name>NS1</name>
        <sequence type="displayed"/>
    </isoform>
    <isoform>
        <id>D0EZM8-2</id>
        <name>NS1-70</name>
        <sequence type="described" ref="VSP_059926 VSP_059927"/>
    </isoform>
    <isoform>
        <id>D0EZM8-3</id>
        <name>NS2</name>
        <sequence type="described" ref="VSP_059925"/>
    </isoform>
    <isoform>
        <id>D0EZM8-4</id>
        <name>NS3</name>
        <sequence type="described" ref="VSP_059924"/>
    </isoform>
    <isoform>
        <id>D0EZM8-5</id>
        <name>NS4</name>
        <sequence type="described" ref="VSP_059924 VSP_059925"/>
    </isoform>
</comment>
<comment type="domain">
    <text evidence="2 7">In the N-terminus, the endonuclease region is involved in binding to the origin of replication (PubMed:23966383). In the middle, there are the ATPase and helicase activities (By similarity). The C-terminus probably contains a transactivation domain (By similarity).</text>
</comment>
<comment type="similarity">
    <text evidence="8">Belongs to the parvoviruses initiator protein NS1 family.</text>
</comment>
<proteinExistence type="evidence at protein level"/>
<reference key="1">
    <citation type="journal article" date="2005" name="Proc. Natl. Acad. Sci. U.S.A.">
        <title>Cloning of a human parvovirus by molecular screening of respiratory tract samples.</title>
        <authorList>
            <person name="Allander T."/>
            <person name="Tammi M.T."/>
            <person name="Eriksson M."/>
            <person name="Bjerkner A."/>
            <person name="Tiveljung-Lindell A."/>
            <person name="Andersson B."/>
        </authorList>
    </citation>
    <scope>NUCLEOTIDE SEQUENCE [GENOMIC DNA] (ISOFORM NS1-70)</scope>
    <source>
        <strain>St2</strain>
    </source>
</reference>
<reference key="2">
    <citation type="journal article" date="2010" name="Virology">
        <title>Characterization of the gene expression profile of human bocavirus.</title>
        <authorList>
            <person name="Chen A.Y."/>
            <person name="Cheng F."/>
            <person name="Lou S."/>
            <person name="Luo Y."/>
            <person name="Liu Z."/>
            <person name="Delwart E."/>
            <person name="Pintel D."/>
            <person name="Qiu J."/>
        </authorList>
    </citation>
    <scope>NUCLEOTIDE SEQUENCE [GENOMIC DNA] (ISOFORMS NS1 AND NS1-70)</scope>
    <scope>SUBCELLULAR LOCATION</scope>
    <scope>ALTERNATIVE SPLICING</scope>
    <source>
        <strain>KU2</strain>
    </source>
</reference>
<reference key="3">
    <citation type="journal article" date="2012" name="PLoS Pathog.">
        <title>Establishment of a reverse genetics system for studying human bocavirus in human airway epithelia.</title>
        <authorList>
            <person name="Huang Q."/>
            <person name="Deng X."/>
            <person name="Yan Z."/>
            <person name="Cheng F."/>
            <person name="Luo Y."/>
            <person name="Shen W."/>
            <person name="Lei-Butters D.C."/>
            <person name="Chen A.Y."/>
            <person name="Li Y."/>
            <person name="Tang L."/>
            <person name="Soderlund-Venermo M."/>
            <person name="Engelhardt J.F."/>
            <person name="Qiu J."/>
        </authorList>
    </citation>
    <scope>NUCLEOTIDE SEQUENCE [GENOMIC DNA] (ISOFORMS NS1 AND NS1-70)</scope>
    <source>
        <strain>KU3</strain>
        <strain>Salvador1</strain>
    </source>
</reference>
<reference key="4">
    <citation type="submission" date="2014-03" db="EMBL/GenBank/DDBJ databases">
        <title>Complete genome sequence of HBoV1 isolated form a child with pneumonia in Cordoba, Argentina.</title>
        <authorList>
            <person name="Cardozo Tomas A."/>
            <person name="Ghietto L.M."/>
            <person name="Insfran C."/>
            <person name="Adamo M.P."/>
        </authorList>
    </citation>
    <scope>NUCLEOTIDE SEQUENCE [GENOMIC DNA] (ISOFORM NS1-70)</scope>
    <source>
        <strain>307AR09</strain>
    </source>
</reference>
<reference key="5">
    <citation type="journal article" date="2017" name="J. Med. Microbiol.">
        <title>Evolutionary and genetic analysis of human bocavirus genotype-1 strains reveals an evidence of intragenomic recombination.</title>
        <authorList>
            <person name="Abdel-Moneim A.S."/>
            <person name="Kamel M.M."/>
            <person name="Hassan N.M."/>
        </authorList>
    </citation>
    <scope>NUCLEOTIDE SEQUENCE [GENOMIC DNA] (ISOFORM NS1-70)</scope>
    <scope>ALTERNATIVE SPLICING</scope>
    <source>
        <strain>Eg/BSU-1</strain>
    </source>
</reference>
<reference key="6">
    <citation type="journal article" date="2013" name="J. Virol.">
        <title>Structure of the NS1 protein N-terminal origin recognition/nickase domain from the emerging human bocavirus.</title>
        <authorList>
            <person name="Tewary S.K."/>
            <person name="Zhao H."/>
            <person name="Shen W."/>
            <person name="Qiu J."/>
            <person name="Tang L."/>
        </authorList>
    </citation>
    <scope>X-RAY CRYSTALLOGRAPHY (2.70 ANGSTROMS) OF 1-271</scope>
    <scope>DOMAIN</scope>
</reference>
<protein>
    <recommendedName>
        <fullName evidence="1">Initiator protein NS1</fullName>
        <shortName>NS1</shortName>
        <ecNumber evidence="2">3.1.21.-</ecNumber>
        <ecNumber evidence="2">3.6.4.12</ecNumber>
    </recommendedName>
    <alternativeName>
        <fullName>Non-structural protein 1</fullName>
    </alternativeName>
    <alternativeName>
        <fullName>Non-structural protein NS1</fullName>
    </alternativeName>
</protein>